<feature type="chain" id="PRO_0000084846" description="Choline/ethanolamine transporter FLVCR2">
    <location>
        <begin position="1"/>
        <end position="526"/>
    </location>
</feature>
<feature type="topological domain" description="Cytoplasmic" evidence="13 21 22 23">
    <location>
        <begin position="1"/>
        <end position="76"/>
    </location>
</feature>
<feature type="transmembrane region" description="Helical; Name=TM1" evidence="13 21 22 23">
    <location>
        <begin position="77"/>
        <end position="101"/>
    </location>
</feature>
<feature type="topological domain" description="Extracellular" evidence="13 21 22 23">
    <location>
        <begin position="102"/>
        <end position="119"/>
    </location>
</feature>
<feature type="transmembrane region" description="Helical; Name=TM2" evidence="13 21 22 23">
    <location>
        <begin position="120"/>
        <end position="147"/>
    </location>
</feature>
<feature type="topological domain" description="Cytoplasmic" evidence="13 21 22 23">
    <location>
        <begin position="148"/>
        <end position="149"/>
    </location>
</feature>
<feature type="transmembrane region" description="Helical; Name=TM3" evidence="13 21 22 23">
    <location>
        <begin position="150"/>
        <end position="169"/>
    </location>
</feature>
<feature type="topological domain" description="Extracellular" evidence="13 21 22 23">
    <location>
        <begin position="170"/>
        <end position="176"/>
    </location>
</feature>
<feature type="transmembrane region" description="Helical; Name=TM4" evidence="13 21 22 23">
    <location>
        <begin position="177"/>
        <end position="205"/>
    </location>
</feature>
<feature type="topological domain" description="Cytoplasmic" evidence="13 21 22 23">
    <location>
        <begin position="206"/>
        <end position="210"/>
    </location>
</feature>
<feature type="transmembrane region" description="Helical; Name=TM5" evidence="13 21 22 23">
    <location>
        <begin position="211"/>
        <end position="236"/>
    </location>
</feature>
<feature type="topological domain" description="Extracellular" evidence="13 21 22 23">
    <location>
        <begin position="237"/>
        <end position="241"/>
    </location>
</feature>
<feature type="transmembrane region" description="Helical; Name=TM6" evidence="13 21 22 23">
    <location>
        <begin position="242"/>
        <end position="271"/>
    </location>
</feature>
<feature type="topological domain" description="Cytoplasmic" evidence="13 21 22 23">
    <location>
        <begin position="272"/>
        <end position="307"/>
    </location>
</feature>
<feature type="transmembrane region" description="Helical; Name=TM7" evidence="13 21 22 23">
    <location>
        <begin position="308"/>
        <end position="338"/>
    </location>
</feature>
<feature type="topological domain" description="Extracellular" evidence="13 21 22 23">
    <location>
        <begin position="339"/>
        <end position="342"/>
    </location>
</feature>
<feature type="transmembrane region" description="Helical; Name=TM8" evidence="13 21 22 23">
    <location>
        <begin position="343"/>
        <end position="371"/>
    </location>
</feature>
<feature type="topological domain" description="Cytoplasmic" evidence="13 21 22 23">
    <location>
        <begin position="372"/>
        <end position="373"/>
    </location>
</feature>
<feature type="transmembrane region" description="Helical; Name=TM9" evidence="13 21 22 23">
    <location>
        <begin position="374"/>
        <end position="396"/>
    </location>
</feature>
<feature type="topological domain" description="Extracellular" evidence="13 21 22 23">
    <location>
        <begin position="397"/>
        <end position="399"/>
    </location>
</feature>
<feature type="transmembrane region" description="Helical; Name=TM10" evidence="13 21 22 23">
    <location>
        <begin position="400"/>
        <end position="429"/>
    </location>
</feature>
<feature type="topological domain" description="Cytoplasmic" evidence="13 21 22 23">
    <location>
        <begin position="430"/>
        <end position="437"/>
    </location>
</feature>
<feature type="transmembrane region" description="Helical; Name=TM11" evidence="13 21 22 23">
    <location>
        <begin position="438"/>
        <end position="463"/>
    </location>
</feature>
<feature type="topological domain" description="Extracellular" evidence="13 21 22 23">
    <location>
        <begin position="464"/>
        <end position="465"/>
    </location>
</feature>
<feature type="transmembrane region" description="Helical; Name=TM12" evidence="13 21 22 23">
    <location>
        <begin position="466"/>
        <end position="488"/>
    </location>
</feature>
<feature type="topological domain" description="Cytoplasmic" evidence="13 21 22 23">
    <location>
        <begin position="489"/>
        <end position="526"/>
    </location>
</feature>
<feature type="repeat" description="1">
    <location>
        <begin position="25"/>
        <end position="30"/>
    </location>
</feature>
<feature type="repeat" description="2">
    <location>
        <begin position="31"/>
        <end position="36"/>
    </location>
</feature>
<feature type="repeat" description="3">
    <location>
        <begin position="37"/>
        <end position="42"/>
    </location>
</feature>
<feature type="repeat" description="4">
    <location>
        <begin position="43"/>
        <end position="48"/>
    </location>
</feature>
<feature type="repeat" description="5">
    <location>
        <begin position="49"/>
        <end position="54"/>
    </location>
</feature>
<feature type="repeat" description="6; approximate">
    <location>
        <begin position="55"/>
        <end position="60"/>
    </location>
</feature>
<feature type="repeat" description="7; approximate">
    <location>
        <begin position="61"/>
        <end position="66"/>
    </location>
</feature>
<feature type="repeat" description="8">
    <location>
        <begin position="67"/>
        <end position="72"/>
    </location>
</feature>
<feature type="region of interest" description="Disordered" evidence="3">
    <location>
        <begin position="1"/>
        <end position="70"/>
    </location>
</feature>
<feature type="region of interest" description="8 X 6 AA tandem repeats of P-S-[VS]-S-[VIAG]-[HNP]">
    <location>
        <begin position="25"/>
        <end position="72"/>
    </location>
</feature>
<feature type="region of interest" description="Disordered" evidence="3">
    <location>
        <begin position="500"/>
        <end position="526"/>
    </location>
</feature>
<feature type="compositionally biased region" description="Low complexity" evidence="3">
    <location>
        <begin position="25"/>
        <end position="56"/>
    </location>
</feature>
<feature type="binding site" evidence="19">
    <location>
        <begin position="1"/>
        <end position="84"/>
    </location>
    <ligand>
        <name>heme b</name>
        <dbReference type="ChEBI" id="CHEBI:60344"/>
    </ligand>
</feature>
<feature type="binding site" evidence="1">
    <location>
        <position position="98"/>
    </location>
    <ligand>
        <name>choline</name>
        <dbReference type="ChEBI" id="CHEBI:15354"/>
    </ligand>
</feature>
<feature type="binding site" evidence="1">
    <location>
        <position position="102"/>
    </location>
    <ligand>
        <name>choline</name>
        <dbReference type="ChEBI" id="CHEBI:15354"/>
    </ligand>
</feature>
<feature type="binding site" evidence="13 23">
    <location>
        <position position="191"/>
    </location>
    <ligand>
        <name>choline</name>
        <dbReference type="ChEBI" id="CHEBI:15354"/>
    </ligand>
</feature>
<feature type="binding site" evidence="1">
    <location>
        <position position="195"/>
    </location>
    <ligand>
        <name>choline</name>
        <dbReference type="ChEBI" id="CHEBI:15354"/>
    </ligand>
</feature>
<feature type="binding site" evidence="1">
    <location>
        <position position="325"/>
    </location>
    <ligand>
        <name>choline</name>
        <dbReference type="ChEBI" id="CHEBI:15354"/>
    </ligand>
</feature>
<feature type="binding site" evidence="13 23">
    <location>
        <position position="447"/>
    </location>
    <ligand>
        <name>choline</name>
        <dbReference type="ChEBI" id="CHEBI:15354"/>
    </ligand>
</feature>
<feature type="modified residue" description="Phosphoserine" evidence="1">
    <location>
        <position position="515"/>
    </location>
</feature>
<feature type="splice variant" id="VSP_043048" description="In isoform 2." evidence="14">
    <original>MVNEGPNQEESDDTPVPE</original>
    <variation>MSADNSSTICVCRSVRQE</variation>
    <location>
        <begin position="1"/>
        <end position="18"/>
    </location>
</feature>
<feature type="splice variant" id="VSP_043049" description="In isoform 2." evidence="14">
    <location>
        <begin position="19"/>
        <end position="223"/>
    </location>
</feature>
<feature type="sequence variant" id="VAR_018271" description="In dbSNP:rs2287015." evidence="4">
    <original>V</original>
    <variation>A</variation>
    <location>
        <position position="16"/>
    </location>
</feature>
<feature type="sequence variant" id="VAR_064410" description="In PVHH; dbSNP:rs534378451." evidence="8">
    <original>R</original>
    <variation>H</variation>
    <location>
        <position position="84"/>
    </location>
</feature>
<feature type="sequence variant" id="VAR_064411" description="In PVHH." evidence="7">
    <original>NIF</original>
    <variation>I</variation>
    <location>
        <begin position="110"/>
        <end position="112"/>
    </location>
</feature>
<feature type="sequence variant" id="VAR_089433" description="In PVHH; reduced choline transport without affecting localization to the plasma membrane." evidence="12">
    <original>S</original>
    <variation>Y</variation>
    <location>
        <position position="203"/>
    </location>
</feature>
<feature type="sequence variant" id="VAR_089434" description="In PVHH; uncertain significance; reduced choline transport; dbSNP:rs140376675." evidence="12">
    <original>P</original>
    <variation>S</variation>
    <location>
        <position position="276"/>
    </location>
</feature>
<feature type="sequence variant" id="VAR_064043" description="In PVHH; dbSNP:rs267606823." evidence="6">
    <original>P</original>
    <variation>R</variation>
    <location>
        <position position="280"/>
    </location>
</feature>
<feature type="sequence variant" id="VAR_064412" description="In PVHH; dbSNP:rs267606824." evidence="7">
    <original>A</original>
    <variation>V</variation>
    <location>
        <position position="326"/>
    </location>
</feature>
<feature type="sequence variant" id="VAR_064413" description="In PVHH." evidence="8">
    <original>T</original>
    <variation>R</variation>
    <location>
        <position position="352"/>
    </location>
</feature>
<feature type="sequence variant" id="VAR_064044" description="In PVHH; dbSNP:rs267606822." evidence="6 7 8">
    <original>L</original>
    <variation>V</variation>
    <location>
        <position position="398"/>
    </location>
</feature>
<feature type="sequence variant" id="VAR_064414" description="In PVHH." evidence="8">
    <original>G</original>
    <variation>R</variation>
    <location>
        <position position="412"/>
    </location>
</feature>
<feature type="sequence variant" id="VAR_064415" description="In PVHH; reduced choline transport without affecting localization to the plasma membrane; dbSNP:rs267606825." evidence="8 10 12">
    <original>T</original>
    <variation>M</variation>
    <location>
        <position position="430"/>
    </location>
</feature>
<feature type="sequence variant" id="VAR_064045" description="In PVHH; reduced choline transport without affecting localization to the plasma membrane; dbSNP:rs267606825." evidence="6 12">
    <original>T</original>
    <variation>R</variation>
    <location>
        <position position="430"/>
    </location>
</feature>
<feature type="sequence variant" id="VAR_050299" description="In dbSNP:rs35126362.">
    <original>A</original>
    <variation>T</variation>
    <location>
        <position position="481"/>
    </location>
</feature>
<feature type="sequence variant" id="VAR_089435" description="In PVHH; uncertain significance; reduced stability; dbSNP:rs1890303877." evidence="12">
    <original>L</original>
    <variation>R</variation>
    <location>
        <position position="483"/>
    </location>
</feature>
<feature type="mutagenesis site" description="Loss of heme-binding activity." evidence="11">
    <original>HPSVSVHPSVSINPSVSVHPSSSAHPSALAQPSGLAH</original>
    <variation>APSVSVAPSVSINPSVSVAPSSSAAPSALAQPSGLAA</variation>
    <location>
        <begin position="30"/>
        <end position="66"/>
    </location>
</feature>
<feature type="mutagenesis site" description="Reduced transport of choline and ethanolamine." evidence="13">
    <original>W</original>
    <variation>A</variation>
    <location>
        <position position="102"/>
    </location>
</feature>
<feature type="mutagenesis site" description="Reduced transport of choline and ethanolamine." evidence="13">
    <original>Q</original>
    <variation>A</variation>
    <location>
        <position position="191"/>
    </location>
</feature>
<feature type="mutagenesis site" description="Reduced transport of choline and ethanolamine." evidence="13">
    <original>N</original>
    <variation>A</variation>
    <location>
        <position position="222"/>
    </location>
</feature>
<feature type="mutagenesis site" description="Slightly reduced transport of choline and ethanolamine." evidence="13">
    <original>Y</original>
    <variation>A</variation>
    <location>
        <position position="325"/>
    </location>
</feature>
<feature type="mutagenesis site" description="Reduced transport of choline and ethanolamine." evidence="13">
    <original>Q</original>
    <variation>A</variation>
    <location>
        <position position="447"/>
    </location>
</feature>
<feature type="sequence conflict" description="In Ref. 3; BAB55381." evidence="17" ref="3">
    <original>L</original>
    <variation>H</variation>
    <location>
        <position position="419"/>
    </location>
</feature>
<feature type="sequence conflict" description="In Ref. 3; BAA91126." evidence="17" ref="3">
    <original>S</original>
    <variation>F</variation>
    <location>
        <position position="439"/>
    </location>
</feature>
<feature type="helix" evidence="24">
    <location>
        <begin position="83"/>
        <end position="106"/>
    </location>
</feature>
<feature type="helix" evidence="24">
    <location>
        <begin position="109"/>
        <end position="116"/>
    </location>
</feature>
<feature type="helix" evidence="24">
    <location>
        <begin position="120"/>
        <end position="167"/>
    </location>
</feature>
<feature type="helix" evidence="24">
    <location>
        <begin position="168"/>
        <end position="171"/>
    </location>
</feature>
<feature type="helix" evidence="24">
    <location>
        <begin position="177"/>
        <end position="192"/>
    </location>
</feature>
<feature type="turn" evidence="24">
    <location>
        <begin position="193"/>
        <end position="196"/>
    </location>
</feature>
<feature type="helix" evidence="24">
    <location>
        <begin position="198"/>
        <end position="205"/>
    </location>
</feature>
<feature type="turn" evidence="24">
    <location>
        <begin position="208"/>
        <end position="210"/>
    </location>
</feature>
<feature type="helix" evidence="24">
    <location>
        <begin position="211"/>
        <end position="236"/>
    </location>
</feature>
<feature type="helix" evidence="24">
    <location>
        <begin position="243"/>
        <end position="271"/>
    </location>
</feature>
<feature type="helix" evidence="24">
    <location>
        <begin position="282"/>
        <end position="290"/>
    </location>
</feature>
<feature type="helix" evidence="24">
    <location>
        <begin position="297"/>
        <end position="304"/>
    </location>
</feature>
<feature type="helix" evidence="24">
    <location>
        <begin position="308"/>
        <end position="329"/>
    </location>
</feature>
<feature type="helix" evidence="24">
    <location>
        <begin position="331"/>
        <end position="338"/>
    </location>
</feature>
<feature type="strand" evidence="24">
    <location>
        <begin position="339"/>
        <end position="341"/>
    </location>
</feature>
<feature type="helix" evidence="24">
    <location>
        <begin position="343"/>
        <end position="371"/>
    </location>
</feature>
<feature type="helix" evidence="24">
    <location>
        <begin position="374"/>
        <end position="395"/>
    </location>
</feature>
<feature type="strand" evidence="24">
    <location>
        <begin position="396"/>
        <end position="398"/>
    </location>
</feature>
<feature type="helix" evidence="24">
    <location>
        <begin position="401"/>
        <end position="430"/>
    </location>
</feature>
<feature type="helix" evidence="24">
    <location>
        <begin position="435"/>
        <end position="464"/>
    </location>
</feature>
<feature type="helix" evidence="24">
    <location>
        <begin position="466"/>
        <end position="485"/>
    </location>
</feature>
<feature type="helix" evidence="24">
    <location>
        <begin position="492"/>
        <end position="501"/>
    </location>
</feature>
<proteinExistence type="evidence at protein level"/>
<organism>
    <name type="scientific">Homo sapiens</name>
    <name type="common">Human</name>
    <dbReference type="NCBI Taxonomy" id="9606"/>
    <lineage>
        <taxon>Eukaryota</taxon>
        <taxon>Metazoa</taxon>
        <taxon>Chordata</taxon>
        <taxon>Craniata</taxon>
        <taxon>Vertebrata</taxon>
        <taxon>Euteleostomi</taxon>
        <taxon>Mammalia</taxon>
        <taxon>Eutheria</taxon>
        <taxon>Euarchontoglires</taxon>
        <taxon>Primates</taxon>
        <taxon>Haplorrhini</taxon>
        <taxon>Catarrhini</taxon>
        <taxon>Hominidae</taxon>
        <taxon>Homo</taxon>
    </lineage>
</organism>
<keyword id="KW-0002">3D-structure</keyword>
<keyword id="KW-0025">Alternative splicing</keyword>
<keyword id="KW-1003">Cell membrane</keyword>
<keyword id="KW-0225">Disease variant</keyword>
<keyword id="KW-0256">Endoplasmic reticulum</keyword>
<keyword id="KW-0472">Membrane</keyword>
<keyword id="KW-0496">Mitochondrion</keyword>
<keyword id="KW-0597">Phosphoprotein</keyword>
<keyword id="KW-1267">Proteomics identification</keyword>
<keyword id="KW-1185">Reference proteome</keyword>
<keyword id="KW-0677">Repeat</keyword>
<keyword id="KW-0812">Transmembrane</keyword>
<keyword id="KW-1133">Transmembrane helix</keyword>
<keyword id="KW-0813">Transport</keyword>
<evidence type="ECO:0000250" key="1">
    <source>
        <dbReference type="UniProtKB" id="Q91X85"/>
    </source>
</evidence>
<evidence type="ECO:0000255" key="2"/>
<evidence type="ECO:0000256" key="3">
    <source>
        <dbReference type="SAM" id="MobiDB-lite"/>
    </source>
</evidence>
<evidence type="ECO:0000269" key="4">
    <source>
    </source>
</evidence>
<evidence type="ECO:0000269" key="5">
    <source>
    </source>
</evidence>
<evidence type="ECO:0000269" key="6">
    <source>
    </source>
</evidence>
<evidence type="ECO:0000269" key="7">
    <source>
    </source>
</evidence>
<evidence type="ECO:0000269" key="8">
    <source>
    </source>
</evidence>
<evidence type="ECO:0000269" key="9">
    <source>
    </source>
</evidence>
<evidence type="ECO:0000269" key="10">
    <source>
    </source>
</evidence>
<evidence type="ECO:0000269" key="11">
    <source>
    </source>
</evidence>
<evidence type="ECO:0000269" key="12">
    <source>
    </source>
</evidence>
<evidence type="ECO:0000269" key="13">
    <source>
    </source>
</evidence>
<evidence type="ECO:0000303" key="14">
    <source>
    </source>
</evidence>
<evidence type="ECO:0000303" key="15">
    <source>
    </source>
</evidence>
<evidence type="ECO:0000303" key="16">
    <source>
    </source>
</evidence>
<evidence type="ECO:0000305" key="17"/>
<evidence type="ECO:0000305" key="18">
    <source>
    </source>
</evidence>
<evidence type="ECO:0000305" key="19">
    <source>
    </source>
</evidence>
<evidence type="ECO:0000312" key="20">
    <source>
        <dbReference type="HGNC" id="HGNC:20105"/>
    </source>
</evidence>
<evidence type="ECO:0007744" key="21">
    <source>
        <dbReference type="PDB" id="8QCX"/>
    </source>
</evidence>
<evidence type="ECO:0007744" key="22">
    <source>
        <dbReference type="PDB" id="8QCY"/>
    </source>
</evidence>
<evidence type="ECO:0007744" key="23">
    <source>
        <dbReference type="PDB" id="8QD0"/>
    </source>
</evidence>
<evidence type="ECO:0007829" key="24">
    <source>
        <dbReference type="PDB" id="8QD0"/>
    </source>
</evidence>
<comment type="function">
    <text evidence="1 9 11 12 13">Choline uniporter that specifically mediates choline uptake at the blood-brain-barrier (PubMed:38302740, PubMed:38778100). Responsible for the majority of choline uptake across the blood-brain-barrier from the circulation into the brain (By similarity). Choline, a nutrient critical for brain development, is a precursor of phosphatidylcholine, as well as betaine (By similarity). Also mediates transport of ethanolamine (PubMed:38778100). Choline and ethanolamine transport is not coupled with proton transport and is exclusively driven by the choline gradient across the plasma membrane (PubMed:38778100). However, the presence of an inwardly directed proton gradient enhances choline uptake (By similarity). Also acts as a heme b transporter (PubMed:20823265, PubMed:32973183). Required to regulate mitochondrial respiration processes, ATP synthesis and thermogenesis (PubMed:32973183). At low heme levels, interacts with components of electron transfer chain (ETC) complexes and ATP2A2, leading to ubiquitin-mediated degradation of ATP2A2 and inhibition of thermogenesis (PubMed:32973183). Upon heme binding, dissociates from ETC complexes to allow switching from mitochondrial ATP synthesis to thermogenesis (PubMed:32973183).</text>
</comment>
<comment type="catalytic activity">
    <reaction evidence="12 13">
        <text>choline(out) = choline(in)</text>
        <dbReference type="Rhea" id="RHEA:32751"/>
        <dbReference type="ChEBI" id="CHEBI:15354"/>
    </reaction>
</comment>
<comment type="catalytic activity">
    <reaction evidence="13">
        <text>ethanolamine(in) = ethanolamine(out)</text>
        <dbReference type="Rhea" id="RHEA:32747"/>
        <dbReference type="ChEBI" id="CHEBI:57603"/>
    </reaction>
</comment>
<comment type="catalytic activity">
    <reaction evidence="18">
        <text>heme b(in) = heme b(out)</text>
        <dbReference type="Rhea" id="RHEA:75443"/>
        <dbReference type="ChEBI" id="CHEBI:60344"/>
    </reaction>
</comment>
<comment type="biophysicochemical properties">
    <kinetics>
        <KM evidence="13">64 uM for choline</KM>
        <KM evidence="13">41.5 uM for ethanolamine</KM>
    </kinetics>
</comment>
<comment type="subunit">
    <text evidence="1">Interacts with components of electron transfer chain complexes III, IV and V including CYC1, NDUFA4, COX4I1, ATP5PD and ATP5F1C; these interactions occur in the absence of heme and are disrupted upon heme binding (By similarity). Interacts with ATP2A2; this interaction occurs in the absence of heme and promotes ATP2A2 proteasomal degradation; the complex is dissociated upon heme binding (By similarity). Interacts with HMOX1; this interaction is potentiated in the presence of heme (By similarity).</text>
</comment>
<comment type="subcellular location">
    <subcellularLocation>
        <location evidence="5 12 13">Cell membrane</location>
        <topology evidence="2">Multi-pass membrane protein</topology>
    </subcellularLocation>
    <subcellularLocation>
        <location evidence="11">Mitochondrion membrane</location>
        <topology evidence="2">Multi-pass membrane protein</topology>
    </subcellularLocation>
    <subcellularLocation>
        <location evidence="11">Endoplasmic reticulum membrane</location>
        <topology evidence="2">Multi-pass membrane protein</topology>
    </subcellularLocation>
    <text evidence="1 11">Present on both luminal (blood-facing) and abluminal (brain-facing) sides of brain endothelial cell plasma membranes, with higher luminal membrane expression (By similarity). Also localizes in mitochondria where it interacts with components of the electron transfer complexes III, IV and V (PubMed:32973183). Colocalizes with ATP2A2 at the mitochondrial-ER contact junction (PubMed:32973183).</text>
</comment>
<comment type="alternative products">
    <event type="alternative splicing"/>
    <isoform>
        <id>Q9UPI3-1</id>
        <name>1</name>
        <sequence type="displayed"/>
    </isoform>
    <isoform>
        <id>Q9UPI3-2</id>
        <name>2</name>
        <sequence type="described" ref="VSP_043048 VSP_043049"/>
    </isoform>
</comment>
<comment type="tissue specificity">
    <text evidence="5 9">Expressed in non-hematopoietic tissues, with relative abundant expression in brain, placenta, lung, liver and kidney (PubMed:20823265). Also expressed in hematopoietic tissues (fetal liver, spleen, lymph node, thymus, leukocytes and bone marrow) (PubMed:20823265). Found in acidophil cells of the pituitary that secrete growth hormone and prolactin (at protein level) (PubMed:14729055).</text>
</comment>
<comment type="developmental stage">
    <text evidence="5">Expressed in follicular cells of the developing thyroid at 18 dpc (at protein level).</text>
</comment>
<comment type="domain">
    <text evidence="11">The N-terminus contains histidine-proline motifs involved in heme binding. Can bind 2 to 3 heme molecules.</text>
</comment>
<comment type="disease" evidence="6 7 8 10 12">
    <disease id="DI-02824">
        <name>Proliferative vasculopathy and hydranencephaly-hydrocephaly syndrome</name>
        <acronym>PVHH</acronym>
        <description>A rare prenatally lethal disorder characterized by hydranencephaly, a distinctive glomerular vasculopathy in the central nervous system and retina, and diffuse ischemic lesions of the brain stem, basal ganglia, and spinal cord with calcifications. Hydranencephaly is a condition where the greater portions of the cerebral hemispheres and corpus striatum are replaced by cerebrospinal fluid and glial tissue.</description>
        <dbReference type="MIM" id="225790"/>
    </disease>
    <text>The disease is caused by variants affecting the gene represented in this entry.</text>
</comment>
<comment type="similarity">
    <text evidence="17">Belongs to the major facilitator superfamily. Feline leukemia virus subgroup C receptor (TC 2.A.1.28.1) family.</text>
</comment>
<comment type="sequence caution" evidence="17">
    <conflict type="erroneous initiation">
        <sequence resource="EMBL-CDS" id="BAB55381"/>
    </conflict>
</comment>
<sequence>MVNEGPNQEESDDTPVPESALQADPSVSVHPSVSVHPSVSINPSVSVHPSSSAHPSALAQPSGLAHPSSSGPEDLSVIKVSRRRWAVVLVFSCYSMCNSFQWIQYGSINNIFMHFYGVSAFAIDWLSMCYMLTYIPLLLPVAWLLEKFGLRTIALTGSALNCLGAWVKLGSLKPHLFPVTVVGQLICSVAQVFILGMPSRIASVWFGANEVSTACSVAVFGNQLGIAIGFLVPPVLVPNIEDRDELAYHISIMFYIIGGVATLLLILVIIVFKEKPKYPPSRAQSLSYALTSPDASYLGSIARLFKNLNFVLLVITYGLNAGAFYALSTLLNRMVIWHYPGEEVNAGRIGLTIVIAGMLGAVISGIWLDRSKTYKETTLVVYIMTLVGMVVYTFTLNLGHLWVVFITAGTMGFFMTGYLPLGFEFAVELTYPESEGISSGLLNISAQVFGIIFTISQGQIIDNYGTKPGNIFLCVFLTLGAALTAFIKADLRRQKANKETLENKLQEEEEESNTSKVPTAVSEDHL</sequence>
<name>FLVC2_HUMAN</name>
<dbReference type="EMBL" id="AY260572">
    <property type="protein sequence ID" value="AAP86633.1"/>
    <property type="molecule type" value="mRNA"/>
</dbReference>
<dbReference type="EMBL" id="AY260577">
    <property type="protein sequence ID" value="AAP86638.1"/>
    <property type="molecule type" value="mRNA"/>
</dbReference>
<dbReference type="EMBL" id="AF456126">
    <property type="protein sequence ID" value="AAO15528.1"/>
    <property type="molecule type" value="mRNA"/>
</dbReference>
<dbReference type="EMBL" id="AK000378">
    <property type="protein sequence ID" value="BAA91126.1"/>
    <property type="molecule type" value="mRNA"/>
</dbReference>
<dbReference type="EMBL" id="AK027804">
    <property type="protein sequence ID" value="BAB55381.1"/>
    <property type="status" value="ALT_INIT"/>
    <property type="molecule type" value="mRNA"/>
</dbReference>
<dbReference type="EMBL" id="AK297002">
    <property type="protein sequence ID" value="BAH12471.1"/>
    <property type="molecule type" value="mRNA"/>
</dbReference>
<dbReference type="EMBL" id="AC007182">
    <property type="protein sequence ID" value="AAD51374.1"/>
    <property type="molecule type" value="Genomic_DNA"/>
</dbReference>
<dbReference type="EMBL" id="CH471061">
    <property type="protein sequence ID" value="EAW81235.1"/>
    <property type="molecule type" value="Genomic_DNA"/>
</dbReference>
<dbReference type="EMBL" id="BC019087">
    <property type="protein sequence ID" value="AAH19087.1"/>
    <property type="molecule type" value="mRNA"/>
</dbReference>
<dbReference type="CCDS" id="CCDS55933.1">
    <molecule id="Q9UPI3-2"/>
</dbReference>
<dbReference type="CCDS" id="CCDS9844.1">
    <molecule id="Q9UPI3-1"/>
</dbReference>
<dbReference type="RefSeq" id="NP_001182212.1">
    <molecule id="Q9UPI3-2"/>
    <property type="nucleotide sequence ID" value="NM_001195283.2"/>
</dbReference>
<dbReference type="RefSeq" id="NP_060261.2">
    <molecule id="Q9UPI3-1"/>
    <property type="nucleotide sequence ID" value="NM_017791.3"/>
</dbReference>
<dbReference type="PDB" id="8QCX">
    <property type="method" value="EM"/>
    <property type="resolution" value="3.10 A"/>
    <property type="chains" value="A=1-526"/>
</dbReference>
<dbReference type="PDB" id="8QCY">
    <property type="method" value="EM"/>
    <property type="resolution" value="2.90 A"/>
    <property type="chains" value="A=1-526"/>
</dbReference>
<dbReference type="PDB" id="8QCZ">
    <property type="method" value="EM"/>
    <property type="resolution" value="3.10 A"/>
    <property type="chains" value="A=1-526"/>
</dbReference>
<dbReference type="PDB" id="8QD0">
    <property type="method" value="EM"/>
    <property type="resolution" value="2.80 A"/>
    <property type="chains" value="A=1-526"/>
</dbReference>
<dbReference type="PDBsum" id="8QCX"/>
<dbReference type="PDBsum" id="8QCY"/>
<dbReference type="PDBsum" id="8QCZ"/>
<dbReference type="PDBsum" id="8QD0"/>
<dbReference type="EMDB" id="EMD-18336"/>
<dbReference type="EMDB" id="EMD-18337"/>
<dbReference type="EMDB" id="EMD-18338"/>
<dbReference type="EMDB" id="EMD-18339"/>
<dbReference type="EMDB" id="EMD-19018"/>
<dbReference type="SMR" id="Q9UPI3"/>
<dbReference type="BioGRID" id="120777">
    <property type="interactions" value="30"/>
</dbReference>
<dbReference type="FunCoup" id="Q9UPI3">
    <property type="interactions" value="693"/>
</dbReference>
<dbReference type="IntAct" id="Q9UPI3">
    <property type="interactions" value="1"/>
</dbReference>
<dbReference type="STRING" id="9606.ENSP00000238667"/>
<dbReference type="TCDB" id="2.A.1.28.4">
    <property type="family name" value="the major facilitator superfamily (mfs)"/>
</dbReference>
<dbReference type="iPTMnet" id="Q9UPI3"/>
<dbReference type="PhosphoSitePlus" id="Q9UPI3"/>
<dbReference type="BioMuta" id="FLVCR2"/>
<dbReference type="DMDM" id="46396034"/>
<dbReference type="jPOST" id="Q9UPI3"/>
<dbReference type="MassIVE" id="Q9UPI3"/>
<dbReference type="PaxDb" id="9606-ENSP00000238667"/>
<dbReference type="PeptideAtlas" id="Q9UPI3"/>
<dbReference type="ProteomicsDB" id="85372">
    <molecule id="Q9UPI3-1"/>
</dbReference>
<dbReference type="ProteomicsDB" id="85373">
    <molecule id="Q9UPI3-2"/>
</dbReference>
<dbReference type="Antibodypedia" id="51434">
    <property type="antibodies" value="122 antibodies from 22 providers"/>
</dbReference>
<dbReference type="DNASU" id="55640"/>
<dbReference type="Ensembl" id="ENST00000238667.9">
    <molecule id="Q9UPI3-1"/>
    <property type="protein sequence ID" value="ENSP00000238667.4"/>
    <property type="gene ID" value="ENSG00000119686.10"/>
</dbReference>
<dbReference type="Ensembl" id="ENST00000539311.5">
    <molecule id="Q9UPI3-2"/>
    <property type="protein sequence ID" value="ENSP00000443439.1"/>
    <property type="gene ID" value="ENSG00000119686.10"/>
</dbReference>
<dbReference type="GeneID" id="55640"/>
<dbReference type="KEGG" id="hsa:55640"/>
<dbReference type="MANE-Select" id="ENST00000238667.9">
    <property type="protein sequence ID" value="ENSP00000238667.4"/>
    <property type="RefSeq nucleotide sequence ID" value="NM_017791.3"/>
    <property type="RefSeq protein sequence ID" value="NP_060261.2"/>
</dbReference>
<dbReference type="UCSC" id="uc001xrs.3">
    <molecule id="Q9UPI3-1"/>
    <property type="organism name" value="human"/>
</dbReference>
<dbReference type="AGR" id="HGNC:20105"/>
<dbReference type="CTD" id="55640"/>
<dbReference type="DisGeNET" id="55640"/>
<dbReference type="GeneCards" id="FLVCR2"/>
<dbReference type="HGNC" id="HGNC:20105">
    <property type="gene designation" value="FLVCR2"/>
</dbReference>
<dbReference type="HPA" id="ENSG00000119686">
    <property type="expression patterns" value="Tissue enhanced (choroid)"/>
</dbReference>
<dbReference type="MalaCards" id="FLVCR2"/>
<dbReference type="MIM" id="225790">
    <property type="type" value="phenotype"/>
</dbReference>
<dbReference type="MIM" id="610865">
    <property type="type" value="gene"/>
</dbReference>
<dbReference type="neXtProt" id="NX_Q9UPI3"/>
<dbReference type="OpenTargets" id="ENSG00000119686"/>
<dbReference type="Orphanet" id="221126">
    <property type="disease" value="Fowler vasculopathy"/>
</dbReference>
<dbReference type="PharmGKB" id="PA162388720"/>
<dbReference type="VEuPathDB" id="HostDB:ENSG00000119686"/>
<dbReference type="eggNOG" id="KOG2563">
    <property type="taxonomic scope" value="Eukaryota"/>
</dbReference>
<dbReference type="GeneTree" id="ENSGT01030000234625"/>
<dbReference type="HOGENOM" id="CLU_023132_0_1_1"/>
<dbReference type="InParanoid" id="Q9UPI3"/>
<dbReference type="OMA" id="TRPGNIF"/>
<dbReference type="OrthoDB" id="422206at2759"/>
<dbReference type="PAN-GO" id="Q9UPI3">
    <property type="GO annotations" value="3 GO annotations based on evolutionary models"/>
</dbReference>
<dbReference type="PhylomeDB" id="Q9UPI3"/>
<dbReference type="TreeFam" id="TF314292"/>
<dbReference type="PathwayCommons" id="Q9UPI3"/>
<dbReference type="SignaLink" id="Q9UPI3"/>
<dbReference type="BioGRID-ORCS" id="55640">
    <property type="hits" value="30 hits in 1151 CRISPR screens"/>
</dbReference>
<dbReference type="ChiTaRS" id="FLVCR2">
    <property type="organism name" value="human"/>
</dbReference>
<dbReference type="GenomeRNAi" id="55640"/>
<dbReference type="Pharos" id="Q9UPI3">
    <property type="development level" value="Tbio"/>
</dbReference>
<dbReference type="PRO" id="PR:Q9UPI3"/>
<dbReference type="Proteomes" id="UP000005640">
    <property type="component" value="Chromosome 14"/>
</dbReference>
<dbReference type="RNAct" id="Q9UPI3">
    <property type="molecule type" value="protein"/>
</dbReference>
<dbReference type="Bgee" id="ENSG00000119686">
    <property type="expression patterns" value="Expressed in secondary oocyte and 136 other cell types or tissues"/>
</dbReference>
<dbReference type="ExpressionAtlas" id="Q9UPI3">
    <property type="expression patterns" value="baseline and differential"/>
</dbReference>
<dbReference type="GO" id="GO:0005789">
    <property type="term" value="C:endoplasmic reticulum membrane"/>
    <property type="evidence" value="ECO:0000314"/>
    <property type="project" value="UniProtKB"/>
</dbReference>
<dbReference type="GO" id="GO:0016020">
    <property type="term" value="C:membrane"/>
    <property type="evidence" value="ECO:0000318"/>
    <property type="project" value="GO_Central"/>
</dbReference>
<dbReference type="GO" id="GO:0031966">
    <property type="term" value="C:mitochondrial membrane"/>
    <property type="evidence" value="ECO:0000314"/>
    <property type="project" value="UniProtKB"/>
</dbReference>
<dbReference type="GO" id="GO:0005886">
    <property type="term" value="C:plasma membrane"/>
    <property type="evidence" value="ECO:0000314"/>
    <property type="project" value="UniProtKB"/>
</dbReference>
<dbReference type="GO" id="GO:0015220">
    <property type="term" value="F:choline transmembrane transporter activity"/>
    <property type="evidence" value="ECO:0000314"/>
    <property type="project" value="UniProtKB"/>
</dbReference>
<dbReference type="GO" id="GO:0034228">
    <property type="term" value="F:ethanolamine transmembrane transporter activity"/>
    <property type="evidence" value="ECO:0000314"/>
    <property type="project" value="UniProtKB"/>
</dbReference>
<dbReference type="GO" id="GO:0020037">
    <property type="term" value="F:heme binding"/>
    <property type="evidence" value="ECO:0000314"/>
    <property type="project" value="UniProtKB"/>
</dbReference>
<dbReference type="GO" id="GO:0015232">
    <property type="term" value="F:heme transmembrane transporter activity"/>
    <property type="evidence" value="ECO:0000314"/>
    <property type="project" value="UniProtKB"/>
</dbReference>
<dbReference type="GO" id="GO:0015871">
    <property type="term" value="P:choline transport"/>
    <property type="evidence" value="ECO:0000314"/>
    <property type="project" value="UniProtKB"/>
</dbReference>
<dbReference type="GO" id="GO:0097037">
    <property type="term" value="P:heme export"/>
    <property type="evidence" value="ECO:0000318"/>
    <property type="project" value="GO_Central"/>
</dbReference>
<dbReference type="GO" id="GO:0150104">
    <property type="term" value="P:transport across blood-brain barrier"/>
    <property type="evidence" value="ECO:0000250"/>
    <property type="project" value="UniProtKB"/>
</dbReference>
<dbReference type="CDD" id="cd17456">
    <property type="entry name" value="MFS_FLVCR2"/>
    <property type="match status" value="1"/>
</dbReference>
<dbReference type="FunFam" id="1.20.1250.20:FF:000101">
    <property type="entry name" value="feline leukemia virus subgroup C receptor-related protein 2"/>
    <property type="match status" value="1"/>
</dbReference>
<dbReference type="FunFam" id="1.20.1250.20:FF:000092">
    <property type="entry name" value="Feline leukemia virus subgroup C receptor-related protein 2 isoform 1"/>
    <property type="match status" value="1"/>
</dbReference>
<dbReference type="Gene3D" id="1.20.1250.20">
    <property type="entry name" value="MFS general substrate transporter like domains"/>
    <property type="match status" value="2"/>
</dbReference>
<dbReference type="InterPro" id="IPR049680">
    <property type="entry name" value="FLVCR1-2_SLC49-like"/>
</dbReference>
<dbReference type="InterPro" id="IPR011701">
    <property type="entry name" value="MFS"/>
</dbReference>
<dbReference type="InterPro" id="IPR020846">
    <property type="entry name" value="MFS_dom"/>
</dbReference>
<dbReference type="InterPro" id="IPR036259">
    <property type="entry name" value="MFS_trans_sf"/>
</dbReference>
<dbReference type="PANTHER" id="PTHR10924:SF3">
    <property type="entry name" value="HEME TRANSPORTER FLVCR2"/>
    <property type="match status" value="1"/>
</dbReference>
<dbReference type="PANTHER" id="PTHR10924">
    <property type="entry name" value="MAJOR FACILITATOR SUPERFAMILY PROTEIN-RELATED"/>
    <property type="match status" value="1"/>
</dbReference>
<dbReference type="Pfam" id="PF07690">
    <property type="entry name" value="MFS_1"/>
    <property type="match status" value="1"/>
</dbReference>
<dbReference type="SUPFAM" id="SSF103473">
    <property type="entry name" value="MFS general substrate transporter"/>
    <property type="match status" value="1"/>
</dbReference>
<dbReference type="PROSITE" id="PS50850">
    <property type="entry name" value="MFS"/>
    <property type="match status" value="1"/>
</dbReference>
<reference key="1">
    <citation type="journal article" date="2004" name="Exp. Cell Res.">
        <title>Novel hexad repeats conserved in a putative transporter with restricted expression in cell types associated with growth, calcium exchange and homeostasis.</title>
        <authorList>
            <person name="Brasier G."/>
            <person name="Tikellis C."/>
            <person name="Xuereb L."/>
            <person name="Craigie J."/>
            <person name="Casley D."/>
            <person name="Kovacs C.S."/>
            <person name="Fudge N.J."/>
            <person name="Kalnins R."/>
            <person name="Cooper M.E."/>
            <person name="Wookey P.J."/>
        </authorList>
    </citation>
    <scope>NUCLEOTIDE SEQUENCE [MRNA] (ISOFORM 1)</scope>
    <scope>SUBCELLULAR LOCATION</scope>
    <scope>TISSUE SPECIFICITY</scope>
    <scope>DEVELOPMENTAL STAGE</scope>
    <source>
        <tissue>Pituitary</tissue>
    </source>
</reference>
<reference key="2">
    <citation type="submission" date="2001-12" db="EMBL/GenBank/DDBJ databases">
        <title>An aspartic acid in the presumptive extracellular loop six of subgroup C feline leukemia virus receptor FLVCR1 is involved in virus infection.</title>
        <authorList>
            <person name="Brown J."/>
            <person name="Pirani H."/>
            <person name="Tailor C.S."/>
        </authorList>
    </citation>
    <scope>NUCLEOTIDE SEQUENCE [MRNA] (ISOFORM 1)</scope>
</reference>
<reference key="3">
    <citation type="journal article" date="2004" name="Nat. Genet.">
        <title>Complete sequencing and characterization of 21,243 full-length human cDNAs.</title>
        <authorList>
            <person name="Ota T."/>
            <person name="Suzuki Y."/>
            <person name="Nishikawa T."/>
            <person name="Otsuki T."/>
            <person name="Sugiyama T."/>
            <person name="Irie R."/>
            <person name="Wakamatsu A."/>
            <person name="Hayashi K."/>
            <person name="Sato H."/>
            <person name="Nagai K."/>
            <person name="Kimura K."/>
            <person name="Makita H."/>
            <person name="Sekine M."/>
            <person name="Obayashi M."/>
            <person name="Nishi T."/>
            <person name="Shibahara T."/>
            <person name="Tanaka T."/>
            <person name="Ishii S."/>
            <person name="Yamamoto J."/>
            <person name="Saito K."/>
            <person name="Kawai Y."/>
            <person name="Isono Y."/>
            <person name="Nakamura Y."/>
            <person name="Nagahari K."/>
            <person name="Murakami K."/>
            <person name="Yasuda T."/>
            <person name="Iwayanagi T."/>
            <person name="Wagatsuma M."/>
            <person name="Shiratori A."/>
            <person name="Sudo H."/>
            <person name="Hosoiri T."/>
            <person name="Kaku Y."/>
            <person name="Kodaira H."/>
            <person name="Kondo H."/>
            <person name="Sugawara M."/>
            <person name="Takahashi M."/>
            <person name="Kanda K."/>
            <person name="Yokoi T."/>
            <person name="Furuya T."/>
            <person name="Kikkawa E."/>
            <person name="Omura Y."/>
            <person name="Abe K."/>
            <person name="Kamihara K."/>
            <person name="Katsuta N."/>
            <person name="Sato K."/>
            <person name="Tanikawa M."/>
            <person name="Yamazaki M."/>
            <person name="Ninomiya K."/>
            <person name="Ishibashi T."/>
            <person name="Yamashita H."/>
            <person name="Murakawa K."/>
            <person name="Fujimori K."/>
            <person name="Tanai H."/>
            <person name="Kimata M."/>
            <person name="Watanabe M."/>
            <person name="Hiraoka S."/>
            <person name="Chiba Y."/>
            <person name="Ishida S."/>
            <person name="Ono Y."/>
            <person name="Takiguchi S."/>
            <person name="Watanabe S."/>
            <person name="Yosida M."/>
            <person name="Hotuta T."/>
            <person name="Kusano J."/>
            <person name="Kanehori K."/>
            <person name="Takahashi-Fujii A."/>
            <person name="Hara H."/>
            <person name="Tanase T.-O."/>
            <person name="Nomura Y."/>
            <person name="Togiya S."/>
            <person name="Komai F."/>
            <person name="Hara R."/>
            <person name="Takeuchi K."/>
            <person name="Arita M."/>
            <person name="Imose N."/>
            <person name="Musashino K."/>
            <person name="Yuuki H."/>
            <person name="Oshima A."/>
            <person name="Sasaki N."/>
            <person name="Aotsuka S."/>
            <person name="Yoshikawa Y."/>
            <person name="Matsunawa H."/>
            <person name="Ichihara T."/>
            <person name="Shiohata N."/>
            <person name="Sano S."/>
            <person name="Moriya S."/>
            <person name="Momiyama H."/>
            <person name="Satoh N."/>
            <person name="Takami S."/>
            <person name="Terashima Y."/>
            <person name="Suzuki O."/>
            <person name="Nakagawa S."/>
            <person name="Senoh A."/>
            <person name="Mizoguchi H."/>
            <person name="Goto Y."/>
            <person name="Shimizu F."/>
            <person name="Wakebe H."/>
            <person name="Hishigaki H."/>
            <person name="Watanabe T."/>
            <person name="Sugiyama A."/>
            <person name="Takemoto M."/>
            <person name="Kawakami B."/>
            <person name="Yamazaki M."/>
            <person name="Watanabe K."/>
            <person name="Kumagai A."/>
            <person name="Itakura S."/>
            <person name="Fukuzumi Y."/>
            <person name="Fujimori Y."/>
            <person name="Komiyama M."/>
            <person name="Tashiro H."/>
            <person name="Tanigami A."/>
            <person name="Fujiwara T."/>
            <person name="Ono T."/>
            <person name="Yamada K."/>
            <person name="Fujii Y."/>
            <person name="Ozaki K."/>
            <person name="Hirao M."/>
            <person name="Ohmori Y."/>
            <person name="Kawabata A."/>
            <person name="Hikiji T."/>
            <person name="Kobatake N."/>
            <person name="Inagaki H."/>
            <person name="Ikema Y."/>
            <person name="Okamoto S."/>
            <person name="Okitani R."/>
            <person name="Kawakami T."/>
            <person name="Noguchi S."/>
            <person name="Itoh T."/>
            <person name="Shigeta K."/>
            <person name="Senba T."/>
            <person name="Matsumura K."/>
            <person name="Nakajima Y."/>
            <person name="Mizuno T."/>
            <person name="Morinaga M."/>
            <person name="Sasaki M."/>
            <person name="Togashi T."/>
            <person name="Oyama M."/>
            <person name="Hata H."/>
            <person name="Watanabe M."/>
            <person name="Komatsu T."/>
            <person name="Mizushima-Sugano J."/>
            <person name="Satoh T."/>
            <person name="Shirai Y."/>
            <person name="Takahashi Y."/>
            <person name="Nakagawa K."/>
            <person name="Okumura K."/>
            <person name="Nagase T."/>
            <person name="Nomura N."/>
            <person name="Kikuchi H."/>
            <person name="Masuho Y."/>
            <person name="Yamashita R."/>
            <person name="Nakai K."/>
            <person name="Yada T."/>
            <person name="Nakamura Y."/>
            <person name="Ohara O."/>
            <person name="Isogai T."/>
            <person name="Sugano S."/>
        </authorList>
    </citation>
    <scope>NUCLEOTIDE SEQUENCE [LARGE SCALE MRNA] (ISOFORMS 1 AND 2)</scope>
    <scope>VARIANT ALA-16</scope>
    <source>
        <tissue>Placenta</tissue>
        <tissue>Umbilical cord blood</tissue>
    </source>
</reference>
<reference key="4">
    <citation type="journal article" date="2003" name="Nature">
        <title>The DNA sequence and analysis of human chromosome 14.</title>
        <authorList>
            <person name="Heilig R."/>
            <person name="Eckenberg R."/>
            <person name="Petit J.-L."/>
            <person name="Fonknechten N."/>
            <person name="Da Silva C."/>
            <person name="Cattolico L."/>
            <person name="Levy M."/>
            <person name="Barbe V."/>
            <person name="De Berardinis V."/>
            <person name="Ureta-Vidal A."/>
            <person name="Pelletier E."/>
            <person name="Vico V."/>
            <person name="Anthouard V."/>
            <person name="Rowen L."/>
            <person name="Madan A."/>
            <person name="Qin S."/>
            <person name="Sun H."/>
            <person name="Du H."/>
            <person name="Pepin K."/>
            <person name="Artiguenave F."/>
            <person name="Robert C."/>
            <person name="Cruaud C."/>
            <person name="Bruels T."/>
            <person name="Jaillon O."/>
            <person name="Friedlander L."/>
            <person name="Samson G."/>
            <person name="Brottier P."/>
            <person name="Cure S."/>
            <person name="Segurens B."/>
            <person name="Aniere F."/>
            <person name="Samain S."/>
            <person name="Crespeau H."/>
            <person name="Abbasi N."/>
            <person name="Aiach N."/>
            <person name="Boscus D."/>
            <person name="Dickhoff R."/>
            <person name="Dors M."/>
            <person name="Dubois I."/>
            <person name="Friedman C."/>
            <person name="Gouyvenoux M."/>
            <person name="James R."/>
            <person name="Madan A."/>
            <person name="Mairey-Estrada B."/>
            <person name="Mangenot S."/>
            <person name="Martins N."/>
            <person name="Menard M."/>
            <person name="Oztas S."/>
            <person name="Ratcliffe A."/>
            <person name="Shaffer T."/>
            <person name="Trask B."/>
            <person name="Vacherie B."/>
            <person name="Bellemere C."/>
            <person name="Belser C."/>
            <person name="Besnard-Gonnet M."/>
            <person name="Bartol-Mavel D."/>
            <person name="Boutard M."/>
            <person name="Briez-Silla S."/>
            <person name="Combette S."/>
            <person name="Dufosse-Laurent V."/>
            <person name="Ferron C."/>
            <person name="Lechaplais C."/>
            <person name="Louesse C."/>
            <person name="Muselet D."/>
            <person name="Magdelenat G."/>
            <person name="Pateau E."/>
            <person name="Petit E."/>
            <person name="Sirvain-Trukniewicz P."/>
            <person name="Trybou A."/>
            <person name="Vega-Czarny N."/>
            <person name="Bataille E."/>
            <person name="Bluet E."/>
            <person name="Bordelais I."/>
            <person name="Dubois M."/>
            <person name="Dumont C."/>
            <person name="Guerin T."/>
            <person name="Haffray S."/>
            <person name="Hammadi R."/>
            <person name="Muanga J."/>
            <person name="Pellouin V."/>
            <person name="Robert D."/>
            <person name="Wunderle E."/>
            <person name="Gauguet G."/>
            <person name="Roy A."/>
            <person name="Sainte-Marthe L."/>
            <person name="Verdier J."/>
            <person name="Verdier-Discala C."/>
            <person name="Hillier L.W."/>
            <person name="Fulton L."/>
            <person name="McPherson J."/>
            <person name="Matsuda F."/>
            <person name="Wilson R."/>
            <person name="Scarpelli C."/>
            <person name="Gyapay G."/>
            <person name="Wincker P."/>
            <person name="Saurin W."/>
            <person name="Quetier F."/>
            <person name="Waterston R."/>
            <person name="Hood L."/>
            <person name="Weissenbach J."/>
        </authorList>
    </citation>
    <scope>NUCLEOTIDE SEQUENCE [LARGE SCALE GENOMIC DNA]</scope>
</reference>
<reference key="5">
    <citation type="submission" date="2005-07" db="EMBL/GenBank/DDBJ databases">
        <authorList>
            <person name="Mural R.J."/>
            <person name="Istrail S."/>
            <person name="Sutton G.G."/>
            <person name="Florea L."/>
            <person name="Halpern A.L."/>
            <person name="Mobarry C.M."/>
            <person name="Lippert R."/>
            <person name="Walenz B."/>
            <person name="Shatkay H."/>
            <person name="Dew I."/>
            <person name="Miller J.R."/>
            <person name="Flanigan M.J."/>
            <person name="Edwards N.J."/>
            <person name="Bolanos R."/>
            <person name="Fasulo D."/>
            <person name="Halldorsson B.V."/>
            <person name="Hannenhalli S."/>
            <person name="Turner R."/>
            <person name="Yooseph S."/>
            <person name="Lu F."/>
            <person name="Nusskern D.R."/>
            <person name="Shue B.C."/>
            <person name="Zheng X.H."/>
            <person name="Zhong F."/>
            <person name="Delcher A.L."/>
            <person name="Huson D.H."/>
            <person name="Kravitz S.A."/>
            <person name="Mouchard L."/>
            <person name="Reinert K."/>
            <person name="Remington K.A."/>
            <person name="Clark A.G."/>
            <person name="Waterman M.S."/>
            <person name="Eichler E.E."/>
            <person name="Adams M.D."/>
            <person name="Hunkapiller M.W."/>
            <person name="Myers E.W."/>
            <person name="Venter J.C."/>
        </authorList>
    </citation>
    <scope>NUCLEOTIDE SEQUENCE [LARGE SCALE GENOMIC DNA]</scope>
</reference>
<reference key="6">
    <citation type="journal article" date="2004" name="Genome Res.">
        <title>The status, quality, and expansion of the NIH full-length cDNA project: the Mammalian Gene Collection (MGC).</title>
        <authorList>
            <consortium name="The MGC Project Team"/>
        </authorList>
    </citation>
    <scope>NUCLEOTIDE SEQUENCE [LARGE SCALE MRNA] (ISOFORM 1)</scope>
    <source>
        <tissue>Colon</tissue>
    </source>
</reference>
<reference key="7">
    <citation type="journal article" date="2010" name="Mol. Cell. Biol.">
        <title>The Fowler syndrome-associated protein FLVCR2 is an importer of heme.</title>
        <authorList>
            <person name="Duffy S.P."/>
            <person name="Shing J."/>
            <person name="Saraon P."/>
            <person name="Berger L.C."/>
            <person name="Eiden M.V."/>
            <person name="Wilde A."/>
            <person name="Tailor C.S."/>
        </authorList>
    </citation>
    <scope>FUNCTION</scope>
    <scope>TRANSPORTER ACTIVITY</scope>
    <scope>TISSUE SPECIFICITY</scope>
</reference>
<reference key="8">
    <citation type="journal article" date="2020" name="Nat. Commun.">
        <title>MFSD7C switches mitochondrial ATP synthesis to thermogenesis in response to heme.</title>
        <authorList>
            <person name="Li Y."/>
            <person name="Ivica N.A."/>
            <person name="Dong T."/>
            <person name="Papageorgiou D.P."/>
            <person name="He Y."/>
            <person name="Brown D.R."/>
            <person name="Kleyman M."/>
            <person name="Hu G."/>
            <person name="Chen W.W."/>
            <person name="Sullivan L.B."/>
            <person name="Del Rosario A."/>
            <person name="Hammond P.T."/>
            <person name="Vander Heiden M.G."/>
            <person name="Chen J."/>
        </authorList>
    </citation>
    <scope>FUNCTION</scope>
    <scope>SUBCELLULAR LOCATION</scope>
    <scope>DOMAIN</scope>
    <scope>MUTAGENESIS OF 30-HIS--HIS-66</scope>
</reference>
<reference key="9">
    <citation type="journal article" date="2024" name="Cell Res.">
        <title>MFSD7c functions as a transporter of choline at the blood-brain barrier.</title>
        <authorList>
            <person name="Nguyen X.T.A."/>
            <person name="Le T.N.U."/>
            <person name="Nguyen T.Q."/>
            <person name="Thi Thuy Ha H."/>
            <person name="Artati A."/>
            <person name="Leong N.C.P."/>
            <person name="Nguyen D.T."/>
            <person name="Lim P.Y."/>
            <person name="Susanto A.V."/>
            <person name="Huang Q."/>
            <person name="Fam L."/>
            <person name="Leong L.N."/>
            <person name="Bonne I."/>
            <person name="Lee A."/>
            <person name="Granadillo J.L."/>
            <person name="Gooch C."/>
            <person name="Yu D."/>
            <person name="Huang H."/>
            <person name="Soong T.W."/>
            <person name="Chang M.W."/>
            <person name="Wenk M.R."/>
            <person name="Adamski J."/>
            <person name="Cazenave-Gassiot A."/>
            <person name="Nguyen L.N."/>
        </authorList>
    </citation>
    <scope>FUNCTION</scope>
    <scope>TRANSPORTER ACTIVITY</scope>
    <scope>SUBCELLULAR LOCATION</scope>
    <scope>VARIANTS PVHH TYR-203; SER-276; ARG-430; MET-430 AND ARG-483</scope>
    <scope>CHARACTERIZATION OF VARIANTS PVHH TYR-203; SER-276; ARG-430; MET-430 AND ARG-483</scope>
</reference>
<reference evidence="21 22 23" key="10">
    <citation type="journal article" date="2024" name="Nature">
        <title>Molecular mechanism of choline and ethanolamine transport in humans.</title>
        <authorList>
            <person name="Ri K."/>
            <person name="Weng T.H."/>
            <person name="Claveras Cabezudo A."/>
            <person name="Joesting W."/>
            <person name="Zhang Y."/>
            <person name="Bazzone A."/>
            <person name="Leong N.C.P."/>
            <person name="Welsch S."/>
            <person name="Doty R.T."/>
            <person name="Gursu G."/>
            <person name="Lim T.J.Y."/>
            <person name="Schmidt S.L."/>
            <person name="Abkowitz J.L."/>
            <person name="Hummer G."/>
            <person name="Wu D."/>
            <person name="Nguyen L.N."/>
            <person name="Safarian S."/>
        </authorList>
    </citation>
    <scope>STRUCTURE BY ELECTRON MICROSCOPY (2.60 ANGSTROMS) IN COMPLEX WITH CHOLINE</scope>
    <scope>FUNCTION</scope>
    <scope>TRANSPORTER ACTIVITY</scope>
    <scope>BIOPHYSICOCHEMICAL PROPERTIES</scope>
    <scope>SUBCELLULAR LOCATION</scope>
    <scope>MUTAGENESIS OF TRP-102; GLN-191; ASN-222; TYR-325 AND GLN-447</scope>
</reference>
<reference key="11">
    <citation type="journal article" date="2010" name="Am. J. Hum. Genet.">
        <title>Mutations in FLVCR2 are associated with proliferative vasculopathy and hydranencephaly-hydrocephaly syndrome (Fowler syndrome).</title>
        <authorList>
            <person name="Meyer E."/>
            <person name="Ricketts C."/>
            <person name="Morgan N.V."/>
            <person name="Morris M.R."/>
            <person name="Pasha S."/>
            <person name="Tee L.J."/>
            <person name="Rahman F."/>
            <person name="Bazin A."/>
            <person name="Bessieres B."/>
            <person name="Dechelotte P."/>
            <person name="Yacoubi M.T."/>
            <person name="Al-Adnani M."/>
            <person name="Marton T."/>
            <person name="Tannahill D."/>
            <person name="Trembath R.C."/>
            <person name="Fallet-Bianco C."/>
            <person name="Cox P."/>
            <person name="Williams D."/>
            <person name="Maher E.R."/>
        </authorList>
    </citation>
    <scope>VARIANTS PVHH ARG-280; VAL-398 AND ARG-430</scope>
</reference>
<reference key="12">
    <citation type="journal article" date="2010" name="Hum. Mutat.">
        <title>Unexpected allelic heterogeneity and spectrum of mutations in Fowler syndrome revealed by next-generation exome sequencing.</title>
        <authorList>
            <person name="Lalonde E."/>
            <person name="Albrecht S."/>
            <person name="Ha K.C."/>
            <person name="Jacob K."/>
            <person name="Bolduc N."/>
            <person name="Polychronakos C."/>
            <person name="Dechelotte P."/>
            <person name="Majewski J."/>
            <person name="Jabado N."/>
        </authorList>
    </citation>
    <scope>VARIANTS PVHH 110-ASN--PHE-112 DELINS ILE; VAL-326 AND VAL-398</scope>
</reference>
<reference key="13">
    <citation type="journal article" date="2010" name="Hum. Mutat.">
        <title>High-throughput sequencing of a 4.1 Mb linkage interval reveals FLVCR2 deletions and mutations in lethal cerebral vasculopathy.</title>
        <authorList>
            <person name="Thomas S."/>
            <person name="Encha-Razavi F."/>
            <person name="Devisme L."/>
            <person name="Etchevers H."/>
            <person name="Bessieres-Grattagliano B."/>
            <person name="Goudefroye G."/>
            <person name="Elkhartoufi N."/>
            <person name="Pateau E."/>
            <person name="Ichkou A."/>
            <person name="Bonniere M."/>
            <person name="Marcorelle P."/>
            <person name="Parent P."/>
            <person name="Manouvrier S."/>
            <person name="Holder M."/>
            <person name="Laquerriere A."/>
            <person name="Loeuillet L."/>
            <person name="Roume J."/>
            <person name="Martinovic J."/>
            <person name="Mougou-Zerelli S."/>
            <person name="Gonzales M."/>
            <person name="Meyer V."/>
            <person name="Wessner M."/>
            <person name="Feysot C.B."/>
            <person name="Nitschke P."/>
            <person name="Leticee N."/>
            <person name="Munnich A."/>
            <person name="Lyonnet S."/>
            <person name="Wookey P."/>
            <person name="Gyapay G."/>
            <person name="Foliguet B."/>
            <person name="Vekemans M."/>
            <person name="Attie-Bitach T."/>
        </authorList>
    </citation>
    <scope>VARIANTS PVHH HIS-84; ARG-352; VAL-398; ARG-412 AND MET-430</scope>
</reference>
<reference key="14">
    <citation type="journal article" date="2016" name="Clin. Genet.">
        <title>Mutations in FLVCR2 associated with Fowler syndrome and survival beyond infancy.</title>
        <authorList>
            <person name="Kvarnung M."/>
            <person name="Taylan F."/>
            <person name="Nilsson D."/>
            <person name="Albaage M."/>
            <person name="Nordenskjoeld M."/>
            <person name="Anderlid B.M."/>
            <person name="Nordgren A."/>
            <person name="Syk Lundberg E."/>
        </authorList>
    </citation>
    <scope>VARIANT PVHH MET-430</scope>
</reference>
<gene>
    <name evidence="16 20" type="primary">FLVCR2</name>
    <name type="synonym">C14orf58</name>
</gene>
<accession>Q9UPI3</accession>
<accession>B7Z485</accession>
<accession>Q53ZT9</accession>
<accession>Q96JY3</accession>
<accession>Q9NX90</accession>
<protein>
    <recommendedName>
        <fullName evidence="17">Choline/ethanolamine transporter FLVCR2</fullName>
    </recommendedName>
    <alternativeName>
        <fullName evidence="15">Calcium-chelate transporter</fullName>
        <shortName evidence="15">CCT</shortName>
    </alternativeName>
    <alternativeName>
        <fullName>Feline leukemia virus subgroup C receptor-related protein 2</fullName>
    </alternativeName>
    <alternativeName>
        <fullName evidence="18">Heme transporter FLVCR2</fullName>
    </alternativeName>
</protein>